<evidence type="ECO:0000250" key="1"/>
<evidence type="ECO:0000256" key="2">
    <source>
        <dbReference type="SAM" id="MobiDB-lite"/>
    </source>
</evidence>
<evidence type="ECO:0000305" key="3"/>
<organism>
    <name type="scientific">Xenopus laevis</name>
    <name type="common">African clawed frog</name>
    <dbReference type="NCBI Taxonomy" id="8355"/>
    <lineage>
        <taxon>Eukaryota</taxon>
        <taxon>Metazoa</taxon>
        <taxon>Chordata</taxon>
        <taxon>Craniata</taxon>
        <taxon>Vertebrata</taxon>
        <taxon>Euteleostomi</taxon>
        <taxon>Amphibia</taxon>
        <taxon>Batrachia</taxon>
        <taxon>Anura</taxon>
        <taxon>Pipoidea</taxon>
        <taxon>Pipidae</taxon>
        <taxon>Xenopodinae</taxon>
        <taxon>Xenopus</taxon>
        <taxon>Xenopus</taxon>
    </lineage>
</organism>
<proteinExistence type="evidence at transcript level"/>
<reference key="1">
    <citation type="submission" date="2004-06" db="EMBL/GenBank/DDBJ databases">
        <authorList>
            <consortium name="NIH - Xenopus Gene Collection (XGC) project"/>
        </authorList>
    </citation>
    <scope>NUCLEOTIDE SEQUENCE [LARGE SCALE MRNA]</scope>
    <source>
        <tissue>Embryo</tissue>
    </source>
</reference>
<keyword id="KW-0966">Cell projection</keyword>
<keyword id="KW-0969">Cilium</keyword>
<keyword id="KW-0970">Cilium biogenesis/degradation</keyword>
<keyword id="KW-0446">Lipid-binding</keyword>
<keyword id="KW-0653">Protein transport</keyword>
<keyword id="KW-1185">Reference proteome</keyword>
<keyword id="KW-0813">Transport</keyword>
<dbReference type="EMBL" id="BC072341">
    <property type="protein sequence ID" value="AAH72341.1"/>
    <property type="molecule type" value="mRNA"/>
</dbReference>
<dbReference type="RefSeq" id="NP_001085421.1">
    <property type="nucleotide sequence ID" value="NM_001091952.1"/>
</dbReference>
<dbReference type="DNASU" id="443847"/>
<dbReference type="GeneID" id="443847"/>
<dbReference type="KEGG" id="xla:443847"/>
<dbReference type="AGR" id="Xenbase:XB-GENE-981107"/>
<dbReference type="CTD" id="443847"/>
<dbReference type="Xenbase" id="XB-GENE-981107">
    <property type="gene designation" value="unc119b.S"/>
</dbReference>
<dbReference type="OrthoDB" id="10248777at2759"/>
<dbReference type="Proteomes" id="UP000186698">
    <property type="component" value="Chromosome 1S"/>
</dbReference>
<dbReference type="Bgee" id="443847">
    <property type="expression patterns" value="Expressed in blastula and 18 other cell types or tissues"/>
</dbReference>
<dbReference type="GO" id="GO:0035869">
    <property type="term" value="C:ciliary transition zone"/>
    <property type="evidence" value="ECO:0000250"/>
    <property type="project" value="UniProtKB"/>
</dbReference>
<dbReference type="GO" id="GO:0005929">
    <property type="term" value="C:cilium"/>
    <property type="evidence" value="ECO:0000318"/>
    <property type="project" value="GO_Central"/>
</dbReference>
<dbReference type="GO" id="GO:0008289">
    <property type="term" value="F:lipid binding"/>
    <property type="evidence" value="ECO:0000250"/>
    <property type="project" value="UniProtKB"/>
</dbReference>
<dbReference type="GO" id="GO:0060271">
    <property type="term" value="P:cilium assembly"/>
    <property type="evidence" value="ECO:0000318"/>
    <property type="project" value="GO_Central"/>
</dbReference>
<dbReference type="GO" id="GO:0042953">
    <property type="term" value="P:lipoprotein transport"/>
    <property type="evidence" value="ECO:0000250"/>
    <property type="project" value="UniProtKB"/>
</dbReference>
<dbReference type="GO" id="GO:0007399">
    <property type="term" value="P:nervous system development"/>
    <property type="evidence" value="ECO:0000318"/>
    <property type="project" value="GO_Central"/>
</dbReference>
<dbReference type="FunFam" id="2.70.50.40:FF:000001">
    <property type="entry name" value="protein unc-119 homolog A"/>
    <property type="match status" value="1"/>
</dbReference>
<dbReference type="Gene3D" id="2.70.50.40">
    <property type="entry name" value="GMP phosphodiesterase, delta subunit"/>
    <property type="match status" value="1"/>
</dbReference>
<dbReference type="InterPro" id="IPR014756">
    <property type="entry name" value="Ig_E-set"/>
</dbReference>
<dbReference type="InterPro" id="IPR051519">
    <property type="entry name" value="PDE6D_unc-119_myristoyl-bd"/>
</dbReference>
<dbReference type="InterPro" id="IPR008015">
    <property type="entry name" value="PDED_dom"/>
</dbReference>
<dbReference type="InterPro" id="IPR037036">
    <property type="entry name" value="PDED_dom_sf"/>
</dbReference>
<dbReference type="PANTHER" id="PTHR12951:SF3">
    <property type="entry name" value="PROTEIN UNC-119 HOMOLOG B"/>
    <property type="match status" value="1"/>
</dbReference>
<dbReference type="PANTHER" id="PTHR12951">
    <property type="entry name" value="RETINAL PROTEIN 4"/>
    <property type="match status" value="1"/>
</dbReference>
<dbReference type="Pfam" id="PF05351">
    <property type="entry name" value="GMP_PDE_delta"/>
    <property type="match status" value="1"/>
</dbReference>
<dbReference type="SUPFAM" id="SSF81296">
    <property type="entry name" value="E set domains"/>
    <property type="match status" value="1"/>
</dbReference>
<protein>
    <recommendedName>
        <fullName>Protein unc-119 homolog B-B</fullName>
    </recommendedName>
</protein>
<comment type="function">
    <text evidence="1">Myristoyl-binding protein that acts as a cargo adapter: specifically binds the myristoyl moiety of a subset of N-terminally myristoylated proteins and is required for their localization. Plays a key role in localization of proteins to the primary cilium membrane (By similarity).</text>
</comment>
<comment type="subcellular location">
    <subcellularLocation>
        <location evidence="1">Cell projection</location>
        <location evidence="1">Cilium</location>
    </subcellularLocation>
</comment>
<comment type="domain">
    <text evidence="1">Adopts an immunoglobulin-like beta-sandwich fold forming a hydrophobic cavity that capture N-terminally myristoylated target peptides. Phe residues within the hydrophobic beta sandwich are required for myristate binding (By similarity).</text>
</comment>
<comment type="similarity">
    <text evidence="3">Belongs to the PDE6D/unc-119 family.</text>
</comment>
<accession>Q6INE2</accession>
<sequence length="241" mass="27870">MSGSNREAALAGQPKDERKKSGGGVINRLKARRVQGKESGTSDQSSITRFREEELLGLNELRPEHVLGLSRVTDNYLCKPEDNIFGIDFTRFKIRDLETGTVLFEISKPCSEQEEEEESTHLDASAGRFVRYQFTPAFLRLRKVGATVEFTVGDKPVKSFRMIERHYFRDRILKSFDFDFGFCIPNSRNTCEHMYEFPQLSEELIRLMTENPYETRSDSFYFVDNKLIMHNKADYAYNGGQ</sequence>
<feature type="chain" id="PRO_0000337232" description="Protein unc-119 homolog B-B">
    <location>
        <begin position="1"/>
        <end position="241"/>
    </location>
</feature>
<feature type="region of interest" description="Disordered" evidence="2">
    <location>
        <begin position="1"/>
        <end position="46"/>
    </location>
</feature>
<feature type="binding site" evidence="1">
    <location>
        <position position="132"/>
    </location>
    <ligand>
        <name>tetradecanoate</name>
        <dbReference type="ChEBI" id="CHEBI:30807"/>
    </ligand>
</feature>
<gene>
    <name type="primary">unc119b-b</name>
</gene>
<name>U19BB_XENLA</name>